<keyword id="KW-0150">Chloroplast</keyword>
<keyword id="KW-0472">Membrane</keyword>
<keyword id="KW-0602">Photosynthesis</keyword>
<keyword id="KW-0603">Photosystem I</keyword>
<keyword id="KW-0934">Plastid</keyword>
<keyword id="KW-0793">Thylakoid</keyword>
<keyword id="KW-0812">Transmembrane</keyword>
<keyword id="KW-1133">Transmembrane helix</keyword>
<feature type="chain" id="PRO_0000276055" description="Photosystem I reaction center subunit IX">
    <location>
        <begin position="1"/>
        <end position="44"/>
    </location>
</feature>
<feature type="transmembrane region" description="Helical" evidence="1">
    <location>
        <begin position="7"/>
        <end position="27"/>
    </location>
</feature>
<proteinExistence type="inferred from homology"/>
<accession>Q06GX7</accession>
<reference key="1">
    <citation type="journal article" date="2006" name="BMC Evol. Biol.">
        <title>Complete plastid genome sequences of Drimys, Liriodendron, and Piper: implications for the phylogenetic relationships of magnoliids.</title>
        <authorList>
            <person name="Cai Z."/>
            <person name="Penaflor C."/>
            <person name="Kuehl J.V."/>
            <person name="Leebens-Mack J."/>
            <person name="Carlson J.E."/>
            <person name="dePamphilis C.W."/>
            <person name="Boore J.L."/>
            <person name="Jansen R.K."/>
        </authorList>
    </citation>
    <scope>NUCLEOTIDE SEQUENCE [LARGE SCALE GENOMIC DNA]</scope>
</reference>
<organism>
    <name type="scientific">Drimys granadensis</name>
    <dbReference type="NCBI Taxonomy" id="224735"/>
    <lineage>
        <taxon>Eukaryota</taxon>
        <taxon>Viridiplantae</taxon>
        <taxon>Streptophyta</taxon>
        <taxon>Embryophyta</taxon>
        <taxon>Tracheophyta</taxon>
        <taxon>Spermatophyta</taxon>
        <taxon>Magnoliopsida</taxon>
        <taxon>Magnoliidae</taxon>
        <taxon>Canellales</taxon>
        <taxon>Winteraceae</taxon>
        <taxon>Drimys</taxon>
    </lineage>
</organism>
<sequence>MRDIKTYLSVAPVLTTLWFGSLAGLLIEINRLFPDALTFSFFSF</sequence>
<dbReference type="EMBL" id="DQ887676">
    <property type="protein sequence ID" value="ABH88317.1"/>
    <property type="molecule type" value="Genomic_DNA"/>
</dbReference>
<dbReference type="RefSeq" id="YP_784406.1">
    <property type="nucleotide sequence ID" value="NC_008456.1"/>
</dbReference>
<dbReference type="SMR" id="Q06GX7"/>
<dbReference type="GeneID" id="4363592"/>
<dbReference type="GO" id="GO:0009535">
    <property type="term" value="C:chloroplast thylakoid membrane"/>
    <property type="evidence" value="ECO:0007669"/>
    <property type="project" value="UniProtKB-SubCell"/>
</dbReference>
<dbReference type="GO" id="GO:0009522">
    <property type="term" value="C:photosystem I"/>
    <property type="evidence" value="ECO:0007669"/>
    <property type="project" value="UniProtKB-KW"/>
</dbReference>
<dbReference type="GO" id="GO:0015979">
    <property type="term" value="P:photosynthesis"/>
    <property type="evidence" value="ECO:0007669"/>
    <property type="project" value="UniProtKB-UniRule"/>
</dbReference>
<dbReference type="FunFam" id="1.20.5.510:FF:000001">
    <property type="entry name" value="Photosystem I reaction center subunit IX"/>
    <property type="match status" value="1"/>
</dbReference>
<dbReference type="Gene3D" id="1.20.5.510">
    <property type="entry name" value="Single helix bin"/>
    <property type="match status" value="1"/>
</dbReference>
<dbReference type="HAMAP" id="MF_00522">
    <property type="entry name" value="PSI_PsaJ"/>
    <property type="match status" value="1"/>
</dbReference>
<dbReference type="InterPro" id="IPR002615">
    <property type="entry name" value="PSI_PsaJ"/>
</dbReference>
<dbReference type="InterPro" id="IPR036062">
    <property type="entry name" value="PSI_PsaJ_sf"/>
</dbReference>
<dbReference type="PANTHER" id="PTHR36082">
    <property type="match status" value="1"/>
</dbReference>
<dbReference type="PANTHER" id="PTHR36082:SF2">
    <property type="entry name" value="PHOTOSYSTEM I REACTION CENTER SUBUNIT IX"/>
    <property type="match status" value="1"/>
</dbReference>
<dbReference type="Pfam" id="PF01701">
    <property type="entry name" value="PSI_PsaJ"/>
    <property type="match status" value="1"/>
</dbReference>
<dbReference type="SUPFAM" id="SSF81544">
    <property type="entry name" value="Subunit IX of photosystem I reaction centre, PsaJ"/>
    <property type="match status" value="1"/>
</dbReference>
<comment type="function">
    <text evidence="1">May help in the organization of the PsaE and PsaF subunits.</text>
</comment>
<comment type="subcellular location">
    <subcellularLocation>
        <location evidence="1">Plastid</location>
        <location evidence="1">Chloroplast thylakoid membrane</location>
        <topology evidence="1">Single-pass membrane protein</topology>
    </subcellularLocation>
</comment>
<comment type="similarity">
    <text evidence="1">Belongs to the PsaJ family.</text>
</comment>
<geneLocation type="chloroplast"/>
<name>PSAJ_DRIGR</name>
<protein>
    <recommendedName>
        <fullName evidence="1">Photosystem I reaction center subunit IX</fullName>
    </recommendedName>
    <alternativeName>
        <fullName evidence="1">PSI-J</fullName>
    </alternativeName>
</protein>
<evidence type="ECO:0000255" key="1">
    <source>
        <dbReference type="HAMAP-Rule" id="MF_00522"/>
    </source>
</evidence>
<gene>
    <name evidence="1" type="primary">psaJ</name>
</gene>